<reference key="1">
    <citation type="journal article" date="2009" name="PLoS ONE">
        <title>Methylobacterium genome sequences: a reference blueprint to investigate microbial metabolism of C1 compounds from natural and industrial sources.</title>
        <authorList>
            <person name="Vuilleumier S."/>
            <person name="Chistoserdova L."/>
            <person name="Lee M.-C."/>
            <person name="Bringel F."/>
            <person name="Lajus A."/>
            <person name="Zhou Y."/>
            <person name="Gourion B."/>
            <person name="Barbe V."/>
            <person name="Chang J."/>
            <person name="Cruveiller S."/>
            <person name="Dossat C."/>
            <person name="Gillett W."/>
            <person name="Gruffaz C."/>
            <person name="Haugen E."/>
            <person name="Hourcade E."/>
            <person name="Levy R."/>
            <person name="Mangenot S."/>
            <person name="Muller E."/>
            <person name="Nadalig T."/>
            <person name="Pagni M."/>
            <person name="Penny C."/>
            <person name="Peyraud R."/>
            <person name="Robinson D.G."/>
            <person name="Roche D."/>
            <person name="Rouy Z."/>
            <person name="Saenampechek C."/>
            <person name="Salvignol G."/>
            <person name="Vallenet D."/>
            <person name="Wu Z."/>
            <person name="Marx C.J."/>
            <person name="Vorholt J.A."/>
            <person name="Olson M.V."/>
            <person name="Kaul R."/>
            <person name="Weissenbach J."/>
            <person name="Medigue C."/>
            <person name="Lidstrom M.E."/>
        </authorList>
    </citation>
    <scope>NUCLEOTIDE SEQUENCE [LARGE SCALE GENOMIC DNA]</scope>
    <source>
        <strain>DSM 6343 / CIP 106787 / DM4</strain>
    </source>
</reference>
<reference key="2">
    <citation type="journal article" date="2017" name="Nat. Chem. Biol.">
        <title>Parallel evolution of non-homologous isofunctional enzymes in methionine biosynthesis.</title>
        <authorList>
            <person name="Bastard K."/>
            <person name="Perret A."/>
            <person name="Mariage A."/>
            <person name="Bessonnet T."/>
            <person name="Pinet-Turpault A."/>
            <person name="Petit J.L."/>
            <person name="Darii E."/>
            <person name="Bazire P."/>
            <person name="Vergne-Vaxelaire C."/>
            <person name="Brewee C."/>
            <person name="Debard A."/>
            <person name="Pellouin V."/>
            <person name="Besnard-Gonnet M."/>
            <person name="Artiguenave F."/>
            <person name="Medigue C."/>
            <person name="Vallenet D."/>
            <person name="Danchin A."/>
            <person name="Zaparucha A."/>
            <person name="Weissenbach J."/>
            <person name="Salanoubat M."/>
            <person name="de Berardinis V."/>
        </authorList>
    </citation>
    <scope>FUNCTION</scope>
    <scope>CATALYTIC ACTIVITY</scope>
</reference>
<organism>
    <name type="scientific">Methylorubrum extorquens (strain DSM 6343 / CIP 106787 / DM4)</name>
    <name type="common">Methylobacterium extorquens</name>
    <dbReference type="NCBI Taxonomy" id="661410"/>
    <lineage>
        <taxon>Bacteria</taxon>
        <taxon>Pseudomonadati</taxon>
        <taxon>Pseudomonadota</taxon>
        <taxon>Alphaproteobacteria</taxon>
        <taxon>Hyphomicrobiales</taxon>
        <taxon>Methylobacteriaceae</taxon>
        <taxon>Methylorubrum</taxon>
    </lineage>
</organism>
<feature type="chain" id="PRO_0000440352" description="Homoserine O-succinyltransferase">
    <location>
        <begin position="1"/>
        <end position="331"/>
    </location>
</feature>
<feature type="active site" description="Acyl-thioester intermediate" evidence="1">
    <location>
        <position position="141"/>
    </location>
</feature>
<feature type="active site" description="Proton acceptor" evidence="1">
    <location>
        <position position="233"/>
    </location>
</feature>
<feature type="active site" evidence="1">
    <location>
        <position position="235"/>
    </location>
</feature>
<feature type="binding site" evidence="1">
    <location>
        <position position="162"/>
    </location>
    <ligand>
        <name>substrate</name>
    </ligand>
</feature>
<feature type="binding site" evidence="1">
    <location>
        <position position="190"/>
    </location>
    <ligand>
        <name>substrate</name>
    </ligand>
</feature>
<feature type="binding site" evidence="1">
    <location>
        <position position="247"/>
    </location>
    <ligand>
        <name>substrate</name>
    </ligand>
</feature>
<feature type="site" description="Important for acyl-CoA specificity" evidence="1">
    <location>
        <position position="108"/>
    </location>
</feature>
<feature type="site" description="Important for acyl-CoA specificity" evidence="1">
    <location>
        <position position="142"/>
    </location>
</feature>
<feature type="site" description="Important for substrate specificity" evidence="1">
    <location>
        <position position="190"/>
    </location>
</feature>
<protein>
    <recommendedName>
        <fullName evidence="1">Homoserine O-succinyltransferase</fullName>
        <shortName evidence="1 3">HST</shortName>
        <ecNumber evidence="1 2">2.3.1.46</ecNumber>
    </recommendedName>
    <alternativeName>
        <fullName evidence="1">Homoserine transsuccinylase</fullName>
        <shortName evidence="1">HTS</shortName>
    </alternativeName>
</protein>
<keyword id="KW-0012">Acyltransferase</keyword>
<keyword id="KW-0028">Amino-acid biosynthesis</keyword>
<keyword id="KW-0963">Cytoplasm</keyword>
<keyword id="KW-0486">Methionine biosynthesis</keyword>
<keyword id="KW-0808">Transferase</keyword>
<proteinExistence type="evidence at protein level"/>
<gene>
    <name evidence="1 3" type="primary">metAS</name>
    <name evidence="4" type="ordered locus">METDI5657</name>
</gene>
<evidence type="ECO:0000255" key="1">
    <source>
        <dbReference type="HAMAP-Rule" id="MF_00295"/>
    </source>
</evidence>
<evidence type="ECO:0000269" key="2">
    <source>
    </source>
</evidence>
<evidence type="ECO:0000303" key="3">
    <source>
    </source>
</evidence>
<evidence type="ECO:0000312" key="4">
    <source>
        <dbReference type="EMBL" id="CAX27261.1"/>
    </source>
</evidence>
<name>METAS_METED</name>
<comment type="function">
    <text evidence="1 2">Transfers a succinyl group from succinyl-CoA to L-homoserine, forming succinyl-L-homoserine.</text>
</comment>
<comment type="catalytic activity">
    <reaction evidence="1 2">
        <text>L-homoserine + succinyl-CoA = O-succinyl-L-homoserine + CoA</text>
        <dbReference type="Rhea" id="RHEA:22008"/>
        <dbReference type="ChEBI" id="CHEBI:57287"/>
        <dbReference type="ChEBI" id="CHEBI:57292"/>
        <dbReference type="ChEBI" id="CHEBI:57476"/>
        <dbReference type="ChEBI" id="CHEBI:57661"/>
        <dbReference type="EC" id="2.3.1.46"/>
    </reaction>
</comment>
<comment type="pathway">
    <text evidence="1">Amino-acid biosynthesis; L-methionine biosynthesis via de novo pathway; O-succinyl-L-homoserine from L-homoserine: step 1/1.</text>
</comment>
<comment type="subcellular location">
    <subcellularLocation>
        <location evidence="1">Cytoplasm</location>
    </subcellularLocation>
</comment>
<comment type="similarity">
    <text evidence="1">Belongs to the MetA family.</text>
</comment>
<sequence length="331" mass="36028">MLDHGTPIQPVSLPAAELDLGAVGGIAWPEPVQRRLRVGLLNNMPDSALVQTERQFRRLIGPGVELRLFSLDTVPRGPLARAHLDRFYETQGALAGAGLDALVVTGAEPKAERLADEPFFPALAAVVDWADASGVPTLFSCLAAHAAVLHLDGIERRPLPTKHSGIYACTAVAHHPLLAGMPASVPVPHSRWNDLPEQALTARGYRVLRRSEQVGVDLFVRERGASMVFLQGHPEYDGDTLAREYRRDIGRFLDGERDTPPALPENYYVDEAVLRLDAFAAVARAYRSPALHADFPTMAETLPRPAAWQEAAAGLFRNWLALVSDRVALAA</sequence>
<accession>C7C8V4</accession>
<dbReference type="EC" id="2.3.1.46" evidence="1 2"/>
<dbReference type="EMBL" id="FP103042">
    <property type="protein sequence ID" value="CAX27261.1"/>
    <property type="molecule type" value="Genomic_DNA"/>
</dbReference>
<dbReference type="RefSeq" id="WP_015824660.1">
    <property type="nucleotide sequence ID" value="NC_012988.1"/>
</dbReference>
<dbReference type="SMR" id="C7C8V4"/>
<dbReference type="GeneID" id="72992339"/>
<dbReference type="KEGG" id="mdi:METDI5657"/>
<dbReference type="HOGENOM" id="CLU_057851_0_1_5"/>
<dbReference type="UniPathway" id="UPA00051">
    <property type="reaction ID" value="UER00075"/>
</dbReference>
<dbReference type="Proteomes" id="UP000008070">
    <property type="component" value="Chromosome"/>
</dbReference>
<dbReference type="GO" id="GO:0005737">
    <property type="term" value="C:cytoplasm"/>
    <property type="evidence" value="ECO:0007669"/>
    <property type="project" value="UniProtKB-SubCell"/>
</dbReference>
<dbReference type="GO" id="GO:0004414">
    <property type="term" value="F:homoserine O-acetyltransferase activity"/>
    <property type="evidence" value="ECO:0007669"/>
    <property type="project" value="UniProtKB-UniRule"/>
</dbReference>
<dbReference type="GO" id="GO:0008899">
    <property type="term" value="F:homoserine O-succinyltransferase activity"/>
    <property type="evidence" value="ECO:0007669"/>
    <property type="project" value="UniProtKB-EC"/>
</dbReference>
<dbReference type="GO" id="GO:0009086">
    <property type="term" value="P:methionine biosynthetic process"/>
    <property type="evidence" value="ECO:0007669"/>
    <property type="project" value="UniProtKB-UniRule"/>
</dbReference>
<dbReference type="Gene3D" id="3.40.50.880">
    <property type="match status" value="1"/>
</dbReference>
<dbReference type="HAMAP" id="MF_00295">
    <property type="entry name" value="MetA_acyltransf"/>
    <property type="match status" value="1"/>
</dbReference>
<dbReference type="InterPro" id="IPR029062">
    <property type="entry name" value="Class_I_gatase-like"/>
</dbReference>
<dbReference type="InterPro" id="IPR033752">
    <property type="entry name" value="MetA_family"/>
</dbReference>
<dbReference type="NCBIfam" id="NF003776">
    <property type="entry name" value="PRK05368.1-3"/>
    <property type="match status" value="1"/>
</dbReference>
<dbReference type="PANTHER" id="PTHR20919">
    <property type="entry name" value="HOMOSERINE O-SUCCINYLTRANSFERASE"/>
    <property type="match status" value="1"/>
</dbReference>
<dbReference type="PANTHER" id="PTHR20919:SF0">
    <property type="entry name" value="HOMOSERINE O-SUCCINYLTRANSFERASE"/>
    <property type="match status" value="1"/>
</dbReference>
<dbReference type="Pfam" id="PF04204">
    <property type="entry name" value="HTS"/>
    <property type="match status" value="1"/>
</dbReference>
<dbReference type="PIRSF" id="PIRSF000450">
    <property type="entry name" value="H_ser_succinyltr"/>
    <property type="match status" value="1"/>
</dbReference>
<dbReference type="SUPFAM" id="SSF52317">
    <property type="entry name" value="Class I glutamine amidotransferase-like"/>
    <property type="match status" value="1"/>
</dbReference>